<name>CMR1_DEBHA</name>
<evidence type="ECO:0000250" key="1">
    <source>
        <dbReference type="UniProtKB" id="Q12510"/>
    </source>
</evidence>
<evidence type="ECO:0000255" key="2"/>
<evidence type="ECO:0000256" key="3">
    <source>
        <dbReference type="SAM" id="MobiDB-lite"/>
    </source>
</evidence>
<evidence type="ECO:0000305" key="4"/>
<sequence length="584" mass="66764">MAPLSDFEKQRQENIQRNKDLLRKLNLDSATDSISREIPNQRQANGAKKRKTNNAAKPIKKEPQEPSRRSRRLAGVTMENTEEYQKVKEEMEEAERKKKELEKLKSTRLFGNFHLIDLVTDKRSGDMKFEKKVLKLPNEIKKEENNTKEIKEEEDDHLQDDDINIESDNKVLEILKDLGDKFSAGDFYDLIRNSSSDYDDKGLESKRNEFDNLKLFERFDPLDIKITHQRITAINFHPSKTDRVITAGDKVGNLGIWAVDSTEDEDPAITILKPHGRSIAKILTPHSNPSKIYSCAYDGSVRELDLNKLESSEVIYLKDPYESQDYPLAVSDINLCQEGNPNVLYLTTLGGHFYQHDLRTPFKSIKPNSLLRLHDKKIGSFCINPNLSHQIATASLDRTFRIWDLRNISKSNSSWSEYEDQISPHVYGSYSSRLSVSSVDWNYENRLVCNGYDDTINIFDLSSESSELPPVTEWSKTYQTGTKNKDEQIPTNIKPFTRIKHNCQTGRWVSILKSRWQASPGDGIQKFVIANMNRGLDIYDQKGQILAHLTDSEKVGAVPAVAAMHPIENWCVGGSASGKLYLFE</sequence>
<feature type="chain" id="PRO_0000351107" description="DNA damage-binding protein CMR1">
    <location>
        <begin position="1"/>
        <end position="584"/>
    </location>
</feature>
<feature type="repeat" description="WD 1" evidence="2">
    <location>
        <begin position="226"/>
        <end position="267"/>
    </location>
</feature>
<feature type="repeat" description="WD 2" evidence="2">
    <location>
        <begin position="274"/>
        <end position="314"/>
    </location>
</feature>
<feature type="repeat" description="WD 3" evidence="2">
    <location>
        <begin position="373"/>
        <end position="413"/>
    </location>
</feature>
<feature type="repeat" description="WD 4" evidence="2">
    <location>
        <begin position="431"/>
        <end position="469"/>
    </location>
</feature>
<feature type="repeat" description="WD 5" evidence="2">
    <location>
        <begin position="506"/>
        <end position="549"/>
    </location>
</feature>
<feature type="repeat" description="WD 6" evidence="2">
    <location>
        <begin position="553"/>
        <end position="584"/>
    </location>
</feature>
<feature type="region of interest" description="Disordered" evidence="3">
    <location>
        <begin position="29"/>
        <end position="90"/>
    </location>
</feature>
<feature type="coiled-coil region" evidence="2">
    <location>
        <begin position="76"/>
        <end position="110"/>
    </location>
</feature>
<feature type="compositionally biased region" description="Polar residues" evidence="3">
    <location>
        <begin position="29"/>
        <end position="44"/>
    </location>
</feature>
<feature type="compositionally biased region" description="Basic and acidic residues" evidence="3">
    <location>
        <begin position="59"/>
        <end position="68"/>
    </location>
</feature>
<gene>
    <name type="ordered locus">DEHA2F21868g</name>
</gene>
<comment type="function">
    <text evidence="1">DNA-binding protein that binds to both single- and double-stranded DNA. Binds preferentially to UV-damaged DNA. May be involved in DNA-metabolic processes.</text>
</comment>
<comment type="similarity">
    <text evidence="4">Belongs to the WD repeat DDB2/WDR76 family.</text>
</comment>
<dbReference type="EMBL" id="CR382138">
    <property type="protein sequence ID" value="CAG89693.2"/>
    <property type="molecule type" value="Genomic_DNA"/>
</dbReference>
<dbReference type="RefSeq" id="XP_461292.2">
    <property type="nucleotide sequence ID" value="XM_461292.1"/>
</dbReference>
<dbReference type="SMR" id="Q6BKH9"/>
<dbReference type="FunCoup" id="Q6BKH9">
    <property type="interactions" value="785"/>
</dbReference>
<dbReference type="STRING" id="284592.Q6BKH9"/>
<dbReference type="GeneID" id="2903365"/>
<dbReference type="KEGG" id="dha:DEHA2F21868g"/>
<dbReference type="VEuPathDB" id="FungiDB:DEHA2F21868g"/>
<dbReference type="eggNOG" id="KOG4328">
    <property type="taxonomic scope" value="Eukaryota"/>
</dbReference>
<dbReference type="HOGENOM" id="CLU_017019_1_1_1"/>
<dbReference type="InParanoid" id="Q6BKH9"/>
<dbReference type="OMA" id="DPNTLYW"/>
<dbReference type="OrthoDB" id="9890280at2759"/>
<dbReference type="Proteomes" id="UP000000599">
    <property type="component" value="Chromosome F"/>
</dbReference>
<dbReference type="GO" id="GO:0000785">
    <property type="term" value="C:chromatin"/>
    <property type="evidence" value="ECO:0007669"/>
    <property type="project" value="EnsemblFungi"/>
</dbReference>
<dbReference type="GO" id="GO:0005737">
    <property type="term" value="C:cytoplasm"/>
    <property type="evidence" value="ECO:0007669"/>
    <property type="project" value="EnsemblFungi"/>
</dbReference>
<dbReference type="GO" id="GO:0034399">
    <property type="term" value="C:nuclear periphery"/>
    <property type="evidence" value="ECO:0007669"/>
    <property type="project" value="EnsemblFungi"/>
</dbReference>
<dbReference type="GO" id="GO:0003677">
    <property type="term" value="F:DNA binding"/>
    <property type="evidence" value="ECO:0007669"/>
    <property type="project" value="UniProtKB-KW"/>
</dbReference>
<dbReference type="GO" id="GO:0006974">
    <property type="term" value="P:DNA damage response"/>
    <property type="evidence" value="ECO:0007669"/>
    <property type="project" value="UniProtKB-KW"/>
</dbReference>
<dbReference type="GO" id="GO:2000001">
    <property type="term" value="P:regulation of DNA damage checkpoint"/>
    <property type="evidence" value="ECO:0007669"/>
    <property type="project" value="EnsemblFungi"/>
</dbReference>
<dbReference type="Gene3D" id="2.130.10.10">
    <property type="entry name" value="YVTN repeat-like/Quinoprotein amine dehydrogenase"/>
    <property type="match status" value="1"/>
</dbReference>
<dbReference type="InterPro" id="IPR015943">
    <property type="entry name" value="WD40/YVTN_repeat-like_dom_sf"/>
</dbReference>
<dbReference type="InterPro" id="IPR036322">
    <property type="entry name" value="WD40_repeat_dom_sf"/>
</dbReference>
<dbReference type="InterPro" id="IPR001680">
    <property type="entry name" value="WD40_rpt"/>
</dbReference>
<dbReference type="InterPro" id="IPR050853">
    <property type="entry name" value="WD_repeat_DNA-damage-binding"/>
</dbReference>
<dbReference type="PANTHER" id="PTHR14773">
    <property type="entry name" value="WD REPEAT-CONTAINING PROTEIN 76"/>
    <property type="match status" value="1"/>
</dbReference>
<dbReference type="PANTHER" id="PTHR14773:SF0">
    <property type="entry name" value="WD REPEAT-CONTAINING PROTEIN 76"/>
    <property type="match status" value="1"/>
</dbReference>
<dbReference type="Pfam" id="PF00400">
    <property type="entry name" value="WD40"/>
    <property type="match status" value="1"/>
</dbReference>
<dbReference type="SMART" id="SM00320">
    <property type="entry name" value="WD40"/>
    <property type="match status" value="4"/>
</dbReference>
<dbReference type="SUPFAM" id="SSF50978">
    <property type="entry name" value="WD40 repeat-like"/>
    <property type="match status" value="1"/>
</dbReference>
<dbReference type="PROSITE" id="PS50082">
    <property type="entry name" value="WD_REPEATS_2"/>
    <property type="match status" value="1"/>
</dbReference>
<dbReference type="PROSITE" id="PS50294">
    <property type="entry name" value="WD_REPEATS_REGION"/>
    <property type="match status" value="1"/>
</dbReference>
<reference key="1">
    <citation type="journal article" date="2004" name="Nature">
        <title>Genome evolution in yeasts.</title>
        <authorList>
            <person name="Dujon B."/>
            <person name="Sherman D."/>
            <person name="Fischer G."/>
            <person name="Durrens P."/>
            <person name="Casaregola S."/>
            <person name="Lafontaine I."/>
            <person name="de Montigny J."/>
            <person name="Marck C."/>
            <person name="Neuveglise C."/>
            <person name="Talla E."/>
            <person name="Goffard N."/>
            <person name="Frangeul L."/>
            <person name="Aigle M."/>
            <person name="Anthouard V."/>
            <person name="Babour A."/>
            <person name="Barbe V."/>
            <person name="Barnay S."/>
            <person name="Blanchin S."/>
            <person name="Beckerich J.-M."/>
            <person name="Beyne E."/>
            <person name="Bleykasten C."/>
            <person name="Boisrame A."/>
            <person name="Boyer J."/>
            <person name="Cattolico L."/>
            <person name="Confanioleri F."/>
            <person name="de Daruvar A."/>
            <person name="Despons L."/>
            <person name="Fabre E."/>
            <person name="Fairhead C."/>
            <person name="Ferry-Dumazet H."/>
            <person name="Groppi A."/>
            <person name="Hantraye F."/>
            <person name="Hennequin C."/>
            <person name="Jauniaux N."/>
            <person name="Joyet P."/>
            <person name="Kachouri R."/>
            <person name="Kerrest A."/>
            <person name="Koszul R."/>
            <person name="Lemaire M."/>
            <person name="Lesur I."/>
            <person name="Ma L."/>
            <person name="Muller H."/>
            <person name="Nicaud J.-M."/>
            <person name="Nikolski M."/>
            <person name="Oztas S."/>
            <person name="Ozier-Kalogeropoulos O."/>
            <person name="Pellenz S."/>
            <person name="Potier S."/>
            <person name="Richard G.-F."/>
            <person name="Straub M.-L."/>
            <person name="Suleau A."/>
            <person name="Swennen D."/>
            <person name="Tekaia F."/>
            <person name="Wesolowski-Louvel M."/>
            <person name="Westhof E."/>
            <person name="Wirth B."/>
            <person name="Zeniou-Meyer M."/>
            <person name="Zivanovic Y."/>
            <person name="Bolotin-Fukuhara M."/>
            <person name="Thierry A."/>
            <person name="Bouchier C."/>
            <person name="Caudron B."/>
            <person name="Scarpelli C."/>
            <person name="Gaillardin C."/>
            <person name="Weissenbach J."/>
            <person name="Wincker P."/>
            <person name="Souciet J.-L."/>
        </authorList>
    </citation>
    <scope>NUCLEOTIDE SEQUENCE [LARGE SCALE GENOMIC DNA]</scope>
    <source>
        <strain>ATCC 36239 / CBS 767 / BCRC 21394 / JCM 1990 / NBRC 0083 / IGC 2968</strain>
    </source>
</reference>
<keyword id="KW-0175">Coiled coil</keyword>
<keyword id="KW-0227">DNA damage</keyword>
<keyword id="KW-0238">DNA-binding</keyword>
<keyword id="KW-1185">Reference proteome</keyword>
<keyword id="KW-0677">Repeat</keyword>
<keyword id="KW-0853">WD repeat</keyword>
<organism>
    <name type="scientific">Debaryomyces hansenii (strain ATCC 36239 / CBS 767 / BCRC 21394 / JCM 1990 / NBRC 0083 / IGC 2968)</name>
    <name type="common">Yeast</name>
    <name type="synonym">Torulaspora hansenii</name>
    <dbReference type="NCBI Taxonomy" id="284592"/>
    <lineage>
        <taxon>Eukaryota</taxon>
        <taxon>Fungi</taxon>
        <taxon>Dikarya</taxon>
        <taxon>Ascomycota</taxon>
        <taxon>Saccharomycotina</taxon>
        <taxon>Pichiomycetes</taxon>
        <taxon>Debaryomycetaceae</taxon>
        <taxon>Debaryomyces</taxon>
    </lineage>
</organism>
<proteinExistence type="inferred from homology"/>
<accession>Q6BKH9</accession>
<protein>
    <recommendedName>
        <fullName evidence="1">DNA damage-binding protein CMR1</fullName>
    </recommendedName>
</protein>